<accession>C7MWV7</accession>
<reference key="1">
    <citation type="journal article" date="2009" name="Stand. Genomic Sci.">
        <title>Complete genome sequence of Saccharomonospora viridis type strain (P101).</title>
        <authorList>
            <person name="Pati A."/>
            <person name="Sikorski J."/>
            <person name="Nolan M."/>
            <person name="Lapidus A."/>
            <person name="Copeland A."/>
            <person name="Glavina Del Rio T."/>
            <person name="Lucas S."/>
            <person name="Chen F."/>
            <person name="Tice H."/>
            <person name="Pitluck S."/>
            <person name="Cheng J.F."/>
            <person name="Chertkov O."/>
            <person name="Brettin T."/>
            <person name="Han C."/>
            <person name="Detter J.C."/>
            <person name="Kuske C."/>
            <person name="Bruce D."/>
            <person name="Goodwin L."/>
            <person name="Chain P."/>
            <person name="D'haeseleer P."/>
            <person name="Chen A."/>
            <person name="Palaniappan K."/>
            <person name="Ivanova N."/>
            <person name="Mavromatis K."/>
            <person name="Mikhailova N."/>
            <person name="Rohde M."/>
            <person name="Tindall B.J."/>
            <person name="Goker M."/>
            <person name="Bristow J."/>
            <person name="Eisen J.A."/>
            <person name="Markowitz V."/>
            <person name="Hugenholtz P."/>
            <person name="Kyrpides N.C."/>
            <person name="Klenk H.P."/>
        </authorList>
    </citation>
    <scope>NUCLEOTIDE SEQUENCE [LARGE SCALE GENOMIC DNA]</scope>
    <source>
        <strain>ATCC 15386 / DSM 43017 / JCM 3036 / CCUG 5913 / NBRC 12207 / NCIMB 9602 / P101</strain>
    </source>
</reference>
<gene>
    <name evidence="1" type="primary">prcB</name>
    <name type="ordered locus">Svir_22030</name>
</gene>
<sequence>MEHTPRNAGFALPAAYMSTMTSSFIDFLKAEAPDLLPRARVENMPAVPGGGSAFEPPHGTTIVASTFNGGVLIAGDRRATTGNTIASRDLEKVYVTDAYSAVGIAGTAGIALELVRLYTVELAHYEKIEGVSLSLDGKANKLANMVKGNLDGALAGLAVLPLFVGYDIDADDPKRAGRIVSFDVTGGRYEENAGYHAIGSGAVYAKSSLKKLYDPEADADTAVRTAIEALYDAADDDTATGGPDLVRRIYPTVVTITAEHGAVMLPQEETASIAESVVRERSERPGQLG</sequence>
<organism>
    <name type="scientific">Saccharomonospora viridis (strain ATCC 15386 / DSM 43017 / JCM 3036 / CCUG 5913 / NBRC 12207 / NCIMB 9602 / P101)</name>
    <name type="common">Thermoactinomyces viridis</name>
    <dbReference type="NCBI Taxonomy" id="471857"/>
    <lineage>
        <taxon>Bacteria</taxon>
        <taxon>Bacillati</taxon>
        <taxon>Actinomycetota</taxon>
        <taxon>Actinomycetes</taxon>
        <taxon>Pseudonocardiales</taxon>
        <taxon>Pseudonocardiaceae</taxon>
        <taxon>Saccharomonospora</taxon>
    </lineage>
</organism>
<keyword id="KW-0068">Autocatalytic cleavage</keyword>
<keyword id="KW-0963">Cytoplasm</keyword>
<keyword id="KW-0378">Hydrolase</keyword>
<keyword id="KW-0645">Protease</keyword>
<keyword id="KW-0647">Proteasome</keyword>
<keyword id="KW-1185">Reference proteome</keyword>
<keyword id="KW-0888">Threonine protease</keyword>
<keyword id="KW-0865">Zymogen</keyword>
<name>PSB_SACVD</name>
<comment type="function">
    <text evidence="1">Component of the proteasome core, a large protease complex with broad specificity involved in protein degradation.</text>
</comment>
<comment type="catalytic activity">
    <reaction evidence="1">
        <text>Cleavage of peptide bonds with very broad specificity.</text>
        <dbReference type="EC" id="3.4.25.1"/>
    </reaction>
</comment>
<comment type="activity regulation">
    <text evidence="1">The formation of the proteasomal ATPase ARC-20S proteasome complex, likely via the docking of the C-termini of ARC into the intersubunit pockets in the alpha-rings, may trigger opening of the gate for substrate entry. Interconversion between the open-gate and close-gate conformations leads to a dynamic regulation of the 20S proteasome proteolysis activity.</text>
</comment>
<comment type="pathway">
    <text evidence="1">Protein degradation; proteasomal Pup-dependent pathway.</text>
</comment>
<comment type="subunit">
    <text evidence="1">The 20S proteasome core is composed of 14 alpha and 14 beta subunits that assemble into four stacked heptameric rings, resulting in a barrel-shaped structure. The two inner rings, each composed of seven catalytic beta subunits, are sandwiched by two outer rings, each composed of seven alpha subunits. The catalytic chamber with the active sites is on the inside of the barrel. Has a gated structure, the ends of the cylinder being occluded by the N-termini of the alpha-subunits. Is capped by the proteasome-associated ATPase, ARC.</text>
</comment>
<comment type="subcellular location">
    <subcellularLocation>
        <location evidence="1">Cytoplasm</location>
    </subcellularLocation>
</comment>
<comment type="similarity">
    <text evidence="1">Belongs to the peptidase T1B family.</text>
</comment>
<feature type="propeptide" id="PRO_0000397570" description="Removed in mature form; by autocatalysis" evidence="1">
    <location>
        <begin position="1"/>
        <end position="59"/>
    </location>
</feature>
<feature type="chain" id="PRO_0000397571" description="Proteasome subunit beta">
    <location>
        <begin position="60"/>
        <end position="289"/>
    </location>
</feature>
<feature type="active site" description="Nucleophile" evidence="1">
    <location>
        <position position="60"/>
    </location>
</feature>
<evidence type="ECO:0000255" key="1">
    <source>
        <dbReference type="HAMAP-Rule" id="MF_02113"/>
    </source>
</evidence>
<protein>
    <recommendedName>
        <fullName evidence="1">Proteasome subunit beta</fullName>
        <ecNumber evidence="1">3.4.25.1</ecNumber>
    </recommendedName>
    <alternativeName>
        <fullName evidence="1">20S proteasome beta subunit</fullName>
    </alternativeName>
    <alternativeName>
        <fullName evidence="1">Proteasome core protein PrcB</fullName>
    </alternativeName>
</protein>
<dbReference type="EC" id="3.4.25.1" evidence="1"/>
<dbReference type="EMBL" id="CP001683">
    <property type="protein sequence ID" value="ACU97211.1"/>
    <property type="molecule type" value="Genomic_DNA"/>
</dbReference>
<dbReference type="RefSeq" id="WP_015786524.1">
    <property type="nucleotide sequence ID" value="NC_013159.1"/>
</dbReference>
<dbReference type="SMR" id="C7MWV7"/>
<dbReference type="STRING" id="471857.Svir_22030"/>
<dbReference type="KEGG" id="svi:Svir_22030"/>
<dbReference type="eggNOG" id="COG0638">
    <property type="taxonomic scope" value="Bacteria"/>
</dbReference>
<dbReference type="HOGENOM" id="CLU_035750_2_0_11"/>
<dbReference type="UniPathway" id="UPA00997"/>
<dbReference type="Proteomes" id="UP000000841">
    <property type="component" value="Chromosome"/>
</dbReference>
<dbReference type="GO" id="GO:0005737">
    <property type="term" value="C:cytoplasm"/>
    <property type="evidence" value="ECO:0007669"/>
    <property type="project" value="UniProtKB-SubCell"/>
</dbReference>
<dbReference type="GO" id="GO:0019774">
    <property type="term" value="C:proteasome core complex, beta-subunit complex"/>
    <property type="evidence" value="ECO:0007669"/>
    <property type="project" value="UniProtKB-UniRule"/>
</dbReference>
<dbReference type="GO" id="GO:0004298">
    <property type="term" value="F:threonine-type endopeptidase activity"/>
    <property type="evidence" value="ECO:0007669"/>
    <property type="project" value="UniProtKB-UniRule"/>
</dbReference>
<dbReference type="GO" id="GO:0019941">
    <property type="term" value="P:modification-dependent protein catabolic process"/>
    <property type="evidence" value="ECO:0007669"/>
    <property type="project" value="UniProtKB-UniRule"/>
</dbReference>
<dbReference type="GO" id="GO:0010498">
    <property type="term" value="P:proteasomal protein catabolic process"/>
    <property type="evidence" value="ECO:0007669"/>
    <property type="project" value="UniProtKB-UniRule"/>
</dbReference>
<dbReference type="CDD" id="cd01906">
    <property type="entry name" value="proteasome_protease_HslV"/>
    <property type="match status" value="1"/>
</dbReference>
<dbReference type="Gene3D" id="3.60.20.10">
    <property type="entry name" value="Glutamine Phosphoribosylpyrophosphate, subunit 1, domain 1"/>
    <property type="match status" value="1"/>
</dbReference>
<dbReference type="HAMAP" id="MF_02113_B">
    <property type="entry name" value="Proteasome_B_B"/>
    <property type="match status" value="1"/>
</dbReference>
<dbReference type="InterPro" id="IPR029055">
    <property type="entry name" value="Ntn_hydrolases_N"/>
</dbReference>
<dbReference type="InterPro" id="IPR001353">
    <property type="entry name" value="Proteasome_sua/b"/>
</dbReference>
<dbReference type="InterPro" id="IPR023333">
    <property type="entry name" value="Proteasome_suB-type"/>
</dbReference>
<dbReference type="InterPro" id="IPR022483">
    <property type="entry name" value="PSB_actinobac"/>
</dbReference>
<dbReference type="NCBIfam" id="TIGR03690">
    <property type="entry name" value="20S_bact_beta"/>
    <property type="match status" value="1"/>
</dbReference>
<dbReference type="PANTHER" id="PTHR32194:SF0">
    <property type="entry name" value="ATP-DEPENDENT PROTEASE SUBUNIT HSLV"/>
    <property type="match status" value="1"/>
</dbReference>
<dbReference type="PANTHER" id="PTHR32194">
    <property type="entry name" value="METALLOPROTEASE TLDD"/>
    <property type="match status" value="1"/>
</dbReference>
<dbReference type="Pfam" id="PF00227">
    <property type="entry name" value="Proteasome"/>
    <property type="match status" value="1"/>
</dbReference>
<dbReference type="SUPFAM" id="SSF56235">
    <property type="entry name" value="N-terminal nucleophile aminohydrolases (Ntn hydrolases)"/>
    <property type="match status" value="1"/>
</dbReference>
<dbReference type="PROSITE" id="PS51476">
    <property type="entry name" value="PROTEASOME_BETA_2"/>
    <property type="match status" value="1"/>
</dbReference>
<proteinExistence type="inferred from homology"/>